<evidence type="ECO:0000250" key="1"/>
<evidence type="ECO:0000305" key="2"/>
<proteinExistence type="inferred from homology"/>
<comment type="function">
    <text evidence="1">Involved in pre-mRNA splicing and cell cycle control.</text>
</comment>
<comment type="subunit">
    <text evidence="1">Associated with the spliceosome.</text>
</comment>
<comment type="subcellular location">
    <subcellularLocation>
        <location evidence="1">Nucleus</location>
    </subcellularLocation>
</comment>
<comment type="similarity">
    <text evidence="2">Belongs to the RSE1 family.</text>
</comment>
<feature type="chain" id="PRO_0000218634" description="Pre-mRNA-splicing factor rse1">
    <location>
        <begin position="1"/>
        <end position="1209"/>
    </location>
</feature>
<protein>
    <recommendedName>
        <fullName>Pre-mRNA-splicing factor rse1</fullName>
    </recommendedName>
    <alternativeName>
        <fullName>mRNA-splicing protein 5</fullName>
    </alternativeName>
</protein>
<organism>
    <name type="scientific">Neurospora crassa (strain ATCC 24698 / 74-OR23-1A / CBS 708.71 / DSM 1257 / FGSC 987)</name>
    <dbReference type="NCBI Taxonomy" id="367110"/>
    <lineage>
        <taxon>Eukaryota</taxon>
        <taxon>Fungi</taxon>
        <taxon>Dikarya</taxon>
        <taxon>Ascomycota</taxon>
        <taxon>Pezizomycotina</taxon>
        <taxon>Sordariomycetes</taxon>
        <taxon>Sordariomycetidae</taxon>
        <taxon>Sordariales</taxon>
        <taxon>Sordariaceae</taxon>
        <taxon>Neurospora</taxon>
    </lineage>
</organism>
<name>RSE1_NEUCR</name>
<reference key="1">
    <citation type="journal article" date="2003" name="Nature">
        <title>The genome sequence of the filamentous fungus Neurospora crassa.</title>
        <authorList>
            <person name="Galagan J.E."/>
            <person name="Calvo S.E."/>
            <person name="Borkovich K.A."/>
            <person name="Selker E.U."/>
            <person name="Read N.D."/>
            <person name="Jaffe D.B."/>
            <person name="FitzHugh W."/>
            <person name="Ma L.-J."/>
            <person name="Smirnov S."/>
            <person name="Purcell S."/>
            <person name="Rehman B."/>
            <person name="Elkins T."/>
            <person name="Engels R."/>
            <person name="Wang S."/>
            <person name="Nielsen C.B."/>
            <person name="Butler J."/>
            <person name="Endrizzi M."/>
            <person name="Qui D."/>
            <person name="Ianakiev P."/>
            <person name="Bell-Pedersen D."/>
            <person name="Nelson M.A."/>
            <person name="Werner-Washburne M."/>
            <person name="Selitrennikoff C.P."/>
            <person name="Kinsey J.A."/>
            <person name="Braun E.L."/>
            <person name="Zelter A."/>
            <person name="Schulte U."/>
            <person name="Kothe G.O."/>
            <person name="Jedd G."/>
            <person name="Mewes H.-W."/>
            <person name="Staben C."/>
            <person name="Marcotte E."/>
            <person name="Greenberg D."/>
            <person name="Roy A."/>
            <person name="Foley K."/>
            <person name="Naylor J."/>
            <person name="Stange-Thomann N."/>
            <person name="Barrett R."/>
            <person name="Gnerre S."/>
            <person name="Kamal M."/>
            <person name="Kamvysselis M."/>
            <person name="Mauceli E.W."/>
            <person name="Bielke C."/>
            <person name="Rudd S."/>
            <person name="Frishman D."/>
            <person name="Krystofova S."/>
            <person name="Rasmussen C."/>
            <person name="Metzenberg R.L."/>
            <person name="Perkins D.D."/>
            <person name="Kroken S."/>
            <person name="Cogoni C."/>
            <person name="Macino G."/>
            <person name="Catcheside D.E.A."/>
            <person name="Li W."/>
            <person name="Pratt R.J."/>
            <person name="Osmani S.A."/>
            <person name="DeSouza C.P.C."/>
            <person name="Glass N.L."/>
            <person name="Orbach M.J."/>
            <person name="Berglund J.A."/>
            <person name="Voelker R."/>
            <person name="Yarden O."/>
            <person name="Plamann M."/>
            <person name="Seiler S."/>
            <person name="Dunlap J.C."/>
            <person name="Radford A."/>
            <person name="Aramayo R."/>
            <person name="Natvig D.O."/>
            <person name="Alex L.A."/>
            <person name="Mannhaupt G."/>
            <person name="Ebbole D.J."/>
            <person name="Freitag M."/>
            <person name="Paulsen I."/>
            <person name="Sachs M.S."/>
            <person name="Lander E.S."/>
            <person name="Nusbaum C."/>
            <person name="Birren B.W."/>
        </authorList>
    </citation>
    <scope>NUCLEOTIDE SEQUENCE [LARGE SCALE GENOMIC DNA]</scope>
    <source>
        <strain>ATCC 24698 / 74-OR23-1A / CBS 708.71 / DSM 1257 / FGSC 987</strain>
    </source>
</reference>
<keyword id="KW-0507">mRNA processing</keyword>
<keyword id="KW-0508">mRNA splicing</keyword>
<keyword id="KW-0539">Nucleus</keyword>
<keyword id="KW-1185">Reference proteome</keyword>
<keyword id="KW-0747">Spliceosome</keyword>
<dbReference type="EMBL" id="CM002238">
    <property type="protein sequence ID" value="ESA43359.1"/>
    <property type="molecule type" value="Genomic_DNA"/>
</dbReference>
<dbReference type="RefSeq" id="XP_011393827.1">
    <property type="nucleotide sequence ID" value="XM_011395525.1"/>
</dbReference>
<dbReference type="SMR" id="Q7RYR4"/>
<dbReference type="FunCoup" id="Q7RYR4">
    <property type="interactions" value="1264"/>
</dbReference>
<dbReference type="STRING" id="367110.Q7RYR4"/>
<dbReference type="PaxDb" id="5141-EFNCRP00000000235"/>
<dbReference type="EnsemblFungi" id="ESA43359">
    <property type="protein sequence ID" value="ESA43359"/>
    <property type="gene ID" value="NCU00396"/>
</dbReference>
<dbReference type="GeneID" id="3873404"/>
<dbReference type="KEGG" id="ncr:NCU00396"/>
<dbReference type="VEuPathDB" id="FungiDB:NCU00396"/>
<dbReference type="HOGENOM" id="CLU_003246_0_0_1"/>
<dbReference type="InParanoid" id="Q7RYR4"/>
<dbReference type="OrthoDB" id="436637at2759"/>
<dbReference type="Proteomes" id="UP000001805">
    <property type="component" value="Chromosome 3, Linkage Group III"/>
</dbReference>
<dbReference type="GO" id="GO:0005634">
    <property type="term" value="C:nucleus"/>
    <property type="evidence" value="ECO:0000318"/>
    <property type="project" value="GO_Central"/>
</dbReference>
<dbReference type="GO" id="GO:0005681">
    <property type="term" value="C:spliceosomal complex"/>
    <property type="evidence" value="ECO:0007669"/>
    <property type="project" value="UniProtKB-KW"/>
</dbReference>
<dbReference type="GO" id="GO:0005686">
    <property type="term" value="C:U2 snRNP"/>
    <property type="evidence" value="ECO:0000318"/>
    <property type="project" value="GO_Central"/>
</dbReference>
<dbReference type="GO" id="GO:0030620">
    <property type="term" value="F:U2 snRNA binding"/>
    <property type="evidence" value="ECO:0000318"/>
    <property type="project" value="GO_Central"/>
</dbReference>
<dbReference type="GO" id="GO:0000398">
    <property type="term" value="P:mRNA splicing, via spliceosome"/>
    <property type="evidence" value="ECO:0000318"/>
    <property type="project" value="GO_Central"/>
</dbReference>
<dbReference type="FunFam" id="2.130.10.10:FF:001143">
    <property type="entry name" value="Pre-mRNA-splicing factor rse-1, putative"/>
    <property type="match status" value="1"/>
</dbReference>
<dbReference type="FunFam" id="2.130.10.10:FF:000586">
    <property type="entry name" value="Pre-mRNA-splicing factor rse1"/>
    <property type="match status" value="1"/>
</dbReference>
<dbReference type="FunFam" id="2.130.10.10:FF:000068">
    <property type="entry name" value="Pre-mRNA-splicing factor rse1, variant"/>
    <property type="match status" value="1"/>
</dbReference>
<dbReference type="Gene3D" id="2.130.10.10">
    <property type="entry name" value="YVTN repeat-like/Quinoprotein amine dehydrogenase"/>
    <property type="match status" value="3"/>
</dbReference>
<dbReference type="InterPro" id="IPR018846">
    <property type="entry name" value="Beta-prop_RSE1/DDB1/CPSF1_1st"/>
</dbReference>
<dbReference type="InterPro" id="IPR004871">
    <property type="entry name" value="Cleavage/polyA-sp_fac_asu_C"/>
</dbReference>
<dbReference type="InterPro" id="IPR050358">
    <property type="entry name" value="RSE1/DDB1/CFT1/CPSF1"/>
</dbReference>
<dbReference type="InterPro" id="IPR015943">
    <property type="entry name" value="WD40/YVTN_repeat-like_dom_sf"/>
</dbReference>
<dbReference type="InterPro" id="IPR036322">
    <property type="entry name" value="WD40_repeat_dom_sf"/>
</dbReference>
<dbReference type="PANTHER" id="PTHR10644">
    <property type="entry name" value="DNA REPAIR/RNA PROCESSING CPSF FAMILY"/>
    <property type="match status" value="1"/>
</dbReference>
<dbReference type="Pfam" id="PF10433">
    <property type="entry name" value="Beta-prop_RSE1_1st"/>
    <property type="match status" value="1"/>
</dbReference>
<dbReference type="Pfam" id="PF23726">
    <property type="entry name" value="Beta-prop_RSE1_2nd"/>
    <property type="match status" value="1"/>
</dbReference>
<dbReference type="Pfam" id="PF03178">
    <property type="entry name" value="CPSF_A"/>
    <property type="match status" value="1"/>
</dbReference>
<dbReference type="SUPFAM" id="SSF50978">
    <property type="entry name" value="WD40 repeat-like"/>
    <property type="match status" value="1"/>
</dbReference>
<sequence>MATTSNMFLYSLTIQPPTAVTQALLGQFSGTKEQQILTASGSRLTLLQPDPRQGKVNTLLSHDIFGIVRAIASFRLAGSHKDYIILATDSGRITIIEYLPKTNKFQRIHLETFGKSGVRRVIPGQYLAADPKGRACLISALEKNKLVYVLNRNSQAELTISSPLEAHKPGVLVLSLVALDVGYANPVFAALELDYTDADQDPTGQAREEVETQLVYYELDLGLNHVVRKWSDTVDRTSSLLFQVPGGNDGPSGVLVCGEENVTYRHSNQEAFRVPIPRRSGATEDPQRKRVIVSGVMHKLKGSAGAFFFLLQTDDGDLFKVTIDMIEDSDGNPTGEVKRLKIKYFDTIPVATSLCILKSGFLFAASEFGNHHFYQFEKLGDDDEELEFSSDDFPTDPTASYNPVYFHPRPLENLVLVESIDSMNPQVDCKVANLTGEDAPQIYSVCGNGARSTFRMLKHGLEVSEIVASELPGTPSAVWTTKLTKYDQYDAYIVLSFTNGTLVLSIGETVEEVSDSGFLTTAPTLAVQQMGEDGLIQVHPKGIRHIVQGRVNEWPAPQHRSIVAATANENQVVIALSSGEIVYFEMDSDGSLAEYDEKKEMSGTVTSLSVGQVPEGLKRSSFLAVGCDDCTVRILSLDPDSTLEMKSIQALTAAPSALSIMSMEDSFGGSTLYLHIGLHSGVYLRTVLDEVTGELTDTRQKFLGPKPTRLFQVSVQDQPCVLALSSRPWLGYTDPLTKGFMMTPLSYTELEYGWNFSSEQCLEGMVGIHANYLRIFSIEKLGDNMIQKSIPLTYTPKHLVKHPEQPYFYTIESDNNTLPPELRAKLLEQQSNGDATVLPPEDFGYPRAKGRWASCISIIDPISEEPRVLQRIDLDNNEAAVSAAIVPFASQEGESFLVVGTGKDMVLDPRQFTEGYIHVYRFHEDGRDLEFIHKTRVEEPPLALIPFQGRLLAGVGKTLRIYDLGLKQLLRKAQADVTPTLIVSLQSQGNRIIVGDLQQGITYVVYKAEGNRLIPFADDTLNRWTTCTTMVDYESVAGGDKFGNIYIVRCPERVSQETDEPGSEIHLMHARNYLHGTPNRLSLQVHFYTQDLPTSICKTSLVVGGQDVLLWSGLQGTVGVFIPFVSREDVDFFQNLENHMRAEDPPLAGRDHLIYRGYYTPVKGVIDGDLCERFSLLPNDKKQMIAGELDRSVREIERKISDIRTRSAF</sequence>
<accession>Q7RYR4</accession>
<accession>U9W538</accession>
<gene>
    <name type="primary">msp-5</name>
    <name type="synonym">rse1</name>
    <name type="ORF">NCU00396</name>
</gene>